<organism>
    <name type="scientific">Haemophilus influenzae (strain ATCC 51907 / DSM 11121 / KW20 / Rd)</name>
    <dbReference type="NCBI Taxonomy" id="71421"/>
    <lineage>
        <taxon>Bacteria</taxon>
        <taxon>Pseudomonadati</taxon>
        <taxon>Pseudomonadota</taxon>
        <taxon>Gammaproteobacteria</taxon>
        <taxon>Pasteurellales</taxon>
        <taxon>Pasteurellaceae</taxon>
        <taxon>Haemophilus</taxon>
    </lineage>
</organism>
<reference key="1">
    <citation type="journal article" date="1995" name="Science">
        <title>Whole-genome random sequencing and assembly of Haemophilus influenzae Rd.</title>
        <authorList>
            <person name="Fleischmann R.D."/>
            <person name="Adams M.D."/>
            <person name="White O."/>
            <person name="Clayton R.A."/>
            <person name="Kirkness E.F."/>
            <person name="Kerlavage A.R."/>
            <person name="Bult C.J."/>
            <person name="Tomb J.-F."/>
            <person name="Dougherty B.A."/>
            <person name="Merrick J.M."/>
            <person name="McKenney K."/>
            <person name="Sutton G.G."/>
            <person name="FitzHugh W."/>
            <person name="Fields C.A."/>
            <person name="Gocayne J.D."/>
            <person name="Scott J.D."/>
            <person name="Shirley R."/>
            <person name="Liu L.-I."/>
            <person name="Glodek A."/>
            <person name="Kelley J.M."/>
            <person name="Weidman J.F."/>
            <person name="Phillips C.A."/>
            <person name="Spriggs T."/>
            <person name="Hedblom E."/>
            <person name="Cotton M.D."/>
            <person name="Utterback T.R."/>
            <person name="Hanna M.C."/>
            <person name="Nguyen D.T."/>
            <person name="Saudek D.M."/>
            <person name="Brandon R.C."/>
            <person name="Fine L.D."/>
            <person name="Fritchman J.L."/>
            <person name="Fuhrmann J.L."/>
            <person name="Geoghagen N.S.M."/>
            <person name="Gnehm C.L."/>
            <person name="McDonald L.A."/>
            <person name="Small K.V."/>
            <person name="Fraser C.M."/>
            <person name="Smith H.O."/>
            <person name="Venter J.C."/>
        </authorList>
    </citation>
    <scope>NUCLEOTIDE SEQUENCE [LARGE SCALE GENOMIC DNA]</scope>
    <source>
        <strain>ATCC 51907 / DSM 11121 / KW20 / Rd</strain>
    </source>
</reference>
<evidence type="ECO:0000250" key="1"/>
<evidence type="ECO:0000250" key="2">
    <source>
        <dbReference type="UniProtKB" id="P0AB89"/>
    </source>
</evidence>
<evidence type="ECO:0000305" key="3"/>
<protein>
    <recommendedName>
        <fullName>Adenylosuccinate lyase</fullName>
        <shortName>ASL</shortName>
        <ecNumber evidence="2">4.3.2.2</ecNumber>
    </recommendedName>
    <alternativeName>
        <fullName>Adenylosuccinase</fullName>
        <shortName>ASase</shortName>
    </alternativeName>
</protein>
<feature type="chain" id="PRO_0000137880" description="Adenylosuccinate lyase">
    <location>
        <begin position="1"/>
        <end position="456"/>
    </location>
</feature>
<feature type="active site" description="Proton donor/acceptor" evidence="2">
    <location>
        <position position="171"/>
    </location>
</feature>
<feature type="active site" description="Proton donor/acceptor" evidence="2">
    <location>
        <position position="295"/>
    </location>
</feature>
<feature type="binding site" evidence="2">
    <location>
        <begin position="15"/>
        <end position="16"/>
    </location>
    <ligand>
        <name>N(6)-(1,2-dicarboxyethyl)-AMP</name>
        <dbReference type="ChEBI" id="CHEBI:57567"/>
    </ligand>
</feature>
<feature type="binding site" evidence="2">
    <location>
        <begin position="90"/>
        <end position="92"/>
    </location>
    <ligand>
        <name>N(6)-(1,2-dicarboxyethyl)-AMP</name>
        <dbReference type="ChEBI" id="CHEBI:57567"/>
    </ligand>
</feature>
<feature type="binding site" evidence="2">
    <location>
        <begin position="122"/>
        <end position="123"/>
    </location>
    <ligand>
        <name>N(6)-(1,2-dicarboxyethyl)-AMP</name>
        <dbReference type="ChEBI" id="CHEBI:57567"/>
    </ligand>
</feature>
<feature type="binding site" evidence="2">
    <location>
        <position position="247"/>
    </location>
    <ligand>
        <name>N(6)-(1,2-dicarboxyethyl)-AMP</name>
        <dbReference type="ChEBI" id="CHEBI:57567"/>
    </ligand>
</feature>
<feature type="binding site" evidence="2">
    <location>
        <position position="296"/>
    </location>
    <ligand>
        <name>N(6)-(1,2-dicarboxyethyl)-AMP</name>
        <dbReference type="ChEBI" id="CHEBI:57567"/>
    </ligand>
</feature>
<feature type="binding site" evidence="2">
    <location>
        <begin position="301"/>
        <end position="303"/>
    </location>
    <ligand>
        <name>N(6)-(1,2-dicarboxyethyl)-AMP</name>
        <dbReference type="ChEBI" id="CHEBI:57567"/>
    </ligand>
</feature>
<feature type="binding site" evidence="2">
    <location>
        <position position="309"/>
    </location>
    <ligand>
        <name>N(6)-(1,2-dicarboxyethyl)-AMP</name>
        <dbReference type="ChEBI" id="CHEBI:57567"/>
    </ligand>
</feature>
<feature type="binding site" evidence="2">
    <location>
        <position position="335"/>
    </location>
    <ligand>
        <name>N(6)-(1,2-dicarboxyethyl)-AMP</name>
        <dbReference type="ChEBI" id="CHEBI:57567"/>
    </ligand>
</feature>
<feature type="binding site" evidence="2">
    <location>
        <begin position="340"/>
        <end position="344"/>
    </location>
    <ligand>
        <name>N(6)-(1,2-dicarboxyethyl)-AMP</name>
        <dbReference type="ChEBI" id="CHEBI:57567"/>
    </ligand>
</feature>
<keyword id="KW-0456">Lyase</keyword>
<keyword id="KW-0658">Purine biosynthesis</keyword>
<keyword id="KW-1185">Reference proteome</keyword>
<proteinExistence type="inferred from homology"/>
<sequence>MQLSTLTALSPLDGRYQDKVTPLRAIFSEFGLMKFRVAVEVRWLQKLASTADITEVPPFSTQANAFLDGIVANFNEADAARIKEIERTTNHDVKAVEYFLKEKIQNEVELVKVSEFIHFACTSEDINNLSHALMLSTARDEVILPEWQKLIDEITRLAEEYKTIPLLSRTHGQPASPSTVGKEMANVVYRLKRQFKQLQNAEILGKINGAVGNYNAHLSAYPNIDWHKFSEEFVTSLGIQWNPYTTQIEPHDYITEFFDAVVRFNTIIIDFDRDLWGYIALNHFKQRTIAGEIGSSTMPHKVNPIDFENSEGNLGLANAVMTHLGQKLPISRWQRDLTDSTVLRNLGVGLGYCLIAYASTRKGISKLEVNQPHLLEELNQNWEVLAEPIQTVMRRYGIEKPYEKLKELTRGKRVTEQAMREFIDKLDIPQEEKLRLQKLTPATYIGAAVELVEKLS</sequence>
<comment type="function">
    <text evidence="2">Catalyzes two reactions in de novo purine nucleotide biosynthesis. Catalyzes the breakdown of 5-aminoimidazole- (N-succinylocarboxamide) ribotide (SAICAR or 2-[5-amino-1-(5-phospho-beta-D-ribosyl)imidazole-4-carboxamido]succinate) to 5-aminoimidazole-4-carboxamide ribotide (AICAR or 5-amino-1-(5-phospho-beta-D-ribosyl)imidazole-4-carboxamide) and fumarate, and of adenylosuccinate (ADS or N(6)-(1,2-dicarboxyethyl)-AMP) to adenosine monophosphate (AMP) and fumarate.</text>
</comment>
<comment type="catalytic activity">
    <reaction evidence="2">
        <text>N(6)-(1,2-dicarboxyethyl)-AMP = fumarate + AMP</text>
        <dbReference type="Rhea" id="RHEA:16853"/>
        <dbReference type="ChEBI" id="CHEBI:29806"/>
        <dbReference type="ChEBI" id="CHEBI:57567"/>
        <dbReference type="ChEBI" id="CHEBI:456215"/>
        <dbReference type="EC" id="4.3.2.2"/>
    </reaction>
    <physiologicalReaction direction="left-to-right" evidence="2">
        <dbReference type="Rhea" id="RHEA:16854"/>
    </physiologicalReaction>
</comment>
<comment type="catalytic activity">
    <reaction evidence="2">
        <text>(2S)-2-[5-amino-1-(5-phospho-beta-D-ribosyl)imidazole-4-carboxamido]succinate = 5-amino-1-(5-phospho-beta-D-ribosyl)imidazole-4-carboxamide + fumarate</text>
        <dbReference type="Rhea" id="RHEA:23920"/>
        <dbReference type="ChEBI" id="CHEBI:29806"/>
        <dbReference type="ChEBI" id="CHEBI:58443"/>
        <dbReference type="ChEBI" id="CHEBI:58475"/>
        <dbReference type="EC" id="4.3.2.2"/>
    </reaction>
    <physiologicalReaction direction="left-to-right" evidence="2">
        <dbReference type="Rhea" id="RHEA:23921"/>
    </physiologicalReaction>
</comment>
<comment type="pathway">
    <text>Purine metabolism; AMP biosynthesis via de novo pathway; AMP from IMP: step 2/2.</text>
</comment>
<comment type="pathway">
    <text>Purine metabolism; IMP biosynthesis via de novo pathway; 5-amino-1-(5-phospho-D-ribosyl)imidazole-4-carboxamide from 5-amino-1-(5-phospho-D-ribosyl)imidazole-4-carboxylate: step 2/2.</text>
</comment>
<comment type="subunit">
    <text evidence="1">Homotetramer. Residues from neighboring subunits contribute catalytic and substrate-binding residues to each active site (By similarity).</text>
</comment>
<comment type="similarity">
    <text evidence="3">Belongs to the lyase 1 family. Adenylosuccinate lyase subfamily.</text>
</comment>
<dbReference type="EC" id="4.3.2.2" evidence="2"/>
<dbReference type="EMBL" id="L42023">
    <property type="protein sequence ID" value="AAC22299.1"/>
    <property type="molecule type" value="Genomic_DNA"/>
</dbReference>
<dbReference type="RefSeq" id="NP_438799.1">
    <property type="nucleotide sequence ID" value="NC_000907.1"/>
</dbReference>
<dbReference type="SMR" id="P44797"/>
<dbReference type="STRING" id="71421.HI_0639"/>
<dbReference type="EnsemblBacteria" id="AAC22299">
    <property type="protein sequence ID" value="AAC22299"/>
    <property type="gene ID" value="HI_0639"/>
</dbReference>
<dbReference type="KEGG" id="hin:HI_0639"/>
<dbReference type="PATRIC" id="fig|71421.8.peg.667"/>
<dbReference type="eggNOG" id="COG0015">
    <property type="taxonomic scope" value="Bacteria"/>
</dbReference>
<dbReference type="HOGENOM" id="CLU_025566_2_0_6"/>
<dbReference type="OrthoDB" id="9768878at2"/>
<dbReference type="PhylomeDB" id="P44797"/>
<dbReference type="BioCyc" id="HINF71421:G1GJ1-670-MONOMER"/>
<dbReference type="UniPathway" id="UPA00074">
    <property type="reaction ID" value="UER00132"/>
</dbReference>
<dbReference type="UniPathway" id="UPA00075">
    <property type="reaction ID" value="UER00336"/>
</dbReference>
<dbReference type="Proteomes" id="UP000000579">
    <property type="component" value="Chromosome"/>
</dbReference>
<dbReference type="GO" id="GO:0005829">
    <property type="term" value="C:cytosol"/>
    <property type="evidence" value="ECO:0000318"/>
    <property type="project" value="GO_Central"/>
</dbReference>
<dbReference type="GO" id="GO:0070626">
    <property type="term" value="F:(S)-2-(5-amino-1-(5-phospho-D-ribosyl)imidazole-4-carboxamido) succinate lyase (fumarate-forming) activity"/>
    <property type="evidence" value="ECO:0007669"/>
    <property type="project" value="RHEA"/>
</dbReference>
<dbReference type="GO" id="GO:0004018">
    <property type="term" value="F:N6-(1,2-dicarboxyethyl)AMP AMP-lyase (fumarate-forming) activity"/>
    <property type="evidence" value="ECO:0007669"/>
    <property type="project" value="InterPro"/>
</dbReference>
<dbReference type="GO" id="GO:0044208">
    <property type="term" value="P:'de novo' AMP biosynthetic process"/>
    <property type="evidence" value="ECO:0007669"/>
    <property type="project" value="UniProtKB-UniPathway"/>
</dbReference>
<dbReference type="GO" id="GO:0006189">
    <property type="term" value="P:'de novo' IMP biosynthetic process"/>
    <property type="evidence" value="ECO:0007669"/>
    <property type="project" value="UniProtKB-UniPathway"/>
</dbReference>
<dbReference type="CDD" id="cd01598">
    <property type="entry name" value="PurB"/>
    <property type="match status" value="1"/>
</dbReference>
<dbReference type="FunFam" id="1.10.275.10:FF:000003">
    <property type="entry name" value="Adenylosuccinate lyase"/>
    <property type="match status" value="1"/>
</dbReference>
<dbReference type="FunFam" id="1.10.40.30:FF:000004">
    <property type="entry name" value="Adenylosuccinate lyase"/>
    <property type="match status" value="1"/>
</dbReference>
<dbReference type="FunFam" id="1.20.200.10:FF:000004">
    <property type="entry name" value="Adenylosuccinate lyase"/>
    <property type="match status" value="1"/>
</dbReference>
<dbReference type="Gene3D" id="1.10.40.30">
    <property type="entry name" value="Fumarase/aspartase (C-terminal domain)"/>
    <property type="match status" value="1"/>
</dbReference>
<dbReference type="Gene3D" id="1.20.200.10">
    <property type="entry name" value="Fumarase/aspartase (Central domain)"/>
    <property type="match status" value="1"/>
</dbReference>
<dbReference type="Gene3D" id="1.10.275.10">
    <property type="entry name" value="Fumarase/aspartase (N-terminal domain)"/>
    <property type="match status" value="1"/>
</dbReference>
<dbReference type="InterPro" id="IPR024083">
    <property type="entry name" value="Fumarase/histidase_N"/>
</dbReference>
<dbReference type="InterPro" id="IPR020557">
    <property type="entry name" value="Fumarate_lyase_CS"/>
</dbReference>
<dbReference type="InterPro" id="IPR000362">
    <property type="entry name" value="Fumarate_lyase_fam"/>
</dbReference>
<dbReference type="InterPro" id="IPR022761">
    <property type="entry name" value="Fumarate_lyase_N"/>
</dbReference>
<dbReference type="InterPro" id="IPR008948">
    <property type="entry name" value="L-Aspartase-like"/>
</dbReference>
<dbReference type="InterPro" id="IPR004769">
    <property type="entry name" value="Pur_lyase"/>
</dbReference>
<dbReference type="InterPro" id="IPR047136">
    <property type="entry name" value="PurB_bact"/>
</dbReference>
<dbReference type="InterPro" id="IPR013539">
    <property type="entry name" value="PurB_C"/>
</dbReference>
<dbReference type="NCBIfam" id="NF006764">
    <property type="entry name" value="PRK09285.1"/>
    <property type="match status" value="1"/>
</dbReference>
<dbReference type="NCBIfam" id="TIGR00928">
    <property type="entry name" value="purB"/>
    <property type="match status" value="1"/>
</dbReference>
<dbReference type="PANTHER" id="PTHR43411">
    <property type="entry name" value="ADENYLOSUCCINATE LYASE"/>
    <property type="match status" value="1"/>
</dbReference>
<dbReference type="PANTHER" id="PTHR43411:SF1">
    <property type="entry name" value="ADENYLOSUCCINATE LYASE"/>
    <property type="match status" value="1"/>
</dbReference>
<dbReference type="Pfam" id="PF08328">
    <property type="entry name" value="ASL_C"/>
    <property type="match status" value="1"/>
</dbReference>
<dbReference type="Pfam" id="PF00206">
    <property type="entry name" value="Lyase_1"/>
    <property type="match status" value="1"/>
</dbReference>
<dbReference type="PRINTS" id="PR00149">
    <property type="entry name" value="FUMRATELYASE"/>
</dbReference>
<dbReference type="SUPFAM" id="SSF48557">
    <property type="entry name" value="L-aspartase-like"/>
    <property type="match status" value="1"/>
</dbReference>
<dbReference type="PROSITE" id="PS00163">
    <property type="entry name" value="FUMARATE_LYASES"/>
    <property type="match status" value="1"/>
</dbReference>
<gene>
    <name type="primary">purB</name>
    <name type="ordered locus">HI_0639</name>
</gene>
<name>PUR8_HAEIN</name>
<accession>P44797</accession>